<comment type="function">
    <text>Involved in oxygen transport from the lung to the various peripheral tissues.</text>
</comment>
<comment type="subunit">
    <text>Heterotetramer of two alpha chains and two beta chains.</text>
</comment>
<comment type="tissue specificity">
    <text>Red blood cells.</text>
</comment>
<comment type="miscellaneous">
    <text>Ghost bat has two hemoglobin components in the ratio 3:2. They share identical beta-chains and differ by three replacements in the alpha chains.</text>
</comment>
<comment type="similarity">
    <text evidence="3">Belongs to the globin family.</text>
</comment>
<keyword id="KW-0007">Acetylation</keyword>
<keyword id="KW-0903">Direct protein sequencing</keyword>
<keyword id="KW-0349">Heme</keyword>
<keyword id="KW-0408">Iron</keyword>
<keyword id="KW-0479">Metal-binding</keyword>
<keyword id="KW-0561">Oxygen transport</keyword>
<keyword id="KW-0597">Phosphoprotein</keyword>
<keyword id="KW-0702">S-nitrosylation</keyword>
<keyword id="KW-0813">Transport</keyword>
<gene>
    <name type="primary">HBB</name>
</gene>
<reference key="1">
    <citation type="journal article" date="1991" name="Biol. Chem. Hoppe-Seyler">
        <title>The primary structure of the hemoglobin from the Australian ghost bat (Macroderma gigas, Microchiroptera).</title>
        <authorList>
            <person name="Singer G.A.M."/>
            <person name="Kleinschmidt T."/>
            <person name="Pettigrew J.D."/>
            <person name="Braunitzer G."/>
        </authorList>
    </citation>
    <scope>PROTEIN SEQUENCE</scope>
</reference>
<name>HBB_MACGG</name>
<evidence type="ECO:0000250" key="1">
    <source>
        <dbReference type="UniProtKB" id="P02086"/>
    </source>
</evidence>
<evidence type="ECO:0000250" key="2">
    <source>
        <dbReference type="UniProtKB" id="P68871"/>
    </source>
</evidence>
<evidence type="ECO:0000255" key="3">
    <source>
        <dbReference type="PROSITE-ProRule" id="PRU00238"/>
    </source>
</evidence>
<sequence>VHLTGEEKAAVTGLWGKVNVEEVGGEALGRLLVVYPWTQRFFDSFGDLSSPSAVMGNPKVKAHGKKVLNSFSDGLKNLDNLKGTFAKLSELHCDKLHVDPENFRLLGNVLVCVLARHFGKEFTPQVQAAYQKVVAGVATALAHKYH</sequence>
<feature type="chain" id="PRO_0000053002" description="Hemoglobin subunit beta">
    <location>
        <begin position="1"/>
        <end position="146"/>
    </location>
</feature>
<feature type="domain" description="Globin" evidence="3">
    <location>
        <begin position="2"/>
        <end position="146"/>
    </location>
</feature>
<feature type="binding site" description="distal binding residue">
    <location>
        <position position="63"/>
    </location>
    <ligand>
        <name>heme b</name>
        <dbReference type="ChEBI" id="CHEBI:60344"/>
    </ligand>
    <ligandPart>
        <name>Fe</name>
        <dbReference type="ChEBI" id="CHEBI:18248"/>
    </ligandPart>
</feature>
<feature type="binding site" description="proximal binding residue">
    <location>
        <position position="92"/>
    </location>
    <ligand>
        <name>heme b</name>
        <dbReference type="ChEBI" id="CHEBI:60344"/>
    </ligand>
    <ligandPart>
        <name>Fe</name>
        <dbReference type="ChEBI" id="CHEBI:18248"/>
    </ligandPart>
</feature>
<feature type="modified residue" description="N-acetylvaline" evidence="1">
    <location>
        <position position="1"/>
    </location>
</feature>
<feature type="modified residue" description="Phosphothreonine" evidence="2">
    <location>
        <position position="12"/>
    </location>
</feature>
<feature type="modified residue" description="Phosphoserine" evidence="2">
    <location>
        <position position="44"/>
    </location>
</feature>
<feature type="modified residue" description="N6-acetyllysine" evidence="2">
    <location>
        <position position="59"/>
    </location>
</feature>
<feature type="modified residue" description="N6-acetyllysine" evidence="2">
    <location>
        <position position="82"/>
    </location>
</feature>
<feature type="modified residue" description="S-nitrosocysteine" evidence="2">
    <location>
        <position position="93"/>
    </location>
</feature>
<feature type="modified residue" description="N6-acetyllysine" evidence="2">
    <location>
        <position position="144"/>
    </location>
</feature>
<accession>P24660</accession>
<protein>
    <recommendedName>
        <fullName>Hemoglobin subunit beta</fullName>
    </recommendedName>
    <alternativeName>
        <fullName>Beta-globin</fullName>
    </alternativeName>
    <alternativeName>
        <fullName>Hemoglobin beta chain</fullName>
    </alternativeName>
</protein>
<organism>
    <name type="scientific">Macroderma gigas</name>
    <name type="common">Australian ghost bat</name>
    <dbReference type="NCBI Taxonomy" id="9411"/>
    <lineage>
        <taxon>Eukaryota</taxon>
        <taxon>Metazoa</taxon>
        <taxon>Chordata</taxon>
        <taxon>Craniata</taxon>
        <taxon>Vertebrata</taxon>
        <taxon>Euteleostomi</taxon>
        <taxon>Mammalia</taxon>
        <taxon>Eutheria</taxon>
        <taxon>Laurasiatheria</taxon>
        <taxon>Chiroptera</taxon>
        <taxon>Yinpterochiroptera</taxon>
        <taxon>Rhinolophoidea</taxon>
        <taxon>Megadermatidae</taxon>
        <taxon>Macroderma</taxon>
    </lineage>
</organism>
<proteinExistence type="evidence at protein level"/>
<dbReference type="PIR" id="S20279">
    <property type="entry name" value="S20279"/>
</dbReference>
<dbReference type="SMR" id="P24660"/>
<dbReference type="GO" id="GO:0072562">
    <property type="term" value="C:blood microparticle"/>
    <property type="evidence" value="ECO:0007669"/>
    <property type="project" value="TreeGrafter"/>
</dbReference>
<dbReference type="GO" id="GO:0031838">
    <property type="term" value="C:haptoglobin-hemoglobin complex"/>
    <property type="evidence" value="ECO:0007669"/>
    <property type="project" value="TreeGrafter"/>
</dbReference>
<dbReference type="GO" id="GO:0005833">
    <property type="term" value="C:hemoglobin complex"/>
    <property type="evidence" value="ECO:0007669"/>
    <property type="project" value="InterPro"/>
</dbReference>
<dbReference type="GO" id="GO:0031720">
    <property type="term" value="F:haptoglobin binding"/>
    <property type="evidence" value="ECO:0007669"/>
    <property type="project" value="TreeGrafter"/>
</dbReference>
<dbReference type="GO" id="GO:0020037">
    <property type="term" value="F:heme binding"/>
    <property type="evidence" value="ECO:0007669"/>
    <property type="project" value="InterPro"/>
</dbReference>
<dbReference type="GO" id="GO:0031721">
    <property type="term" value="F:hemoglobin alpha binding"/>
    <property type="evidence" value="ECO:0007669"/>
    <property type="project" value="TreeGrafter"/>
</dbReference>
<dbReference type="GO" id="GO:0046872">
    <property type="term" value="F:metal ion binding"/>
    <property type="evidence" value="ECO:0007669"/>
    <property type="project" value="UniProtKB-KW"/>
</dbReference>
<dbReference type="GO" id="GO:0043177">
    <property type="term" value="F:organic acid binding"/>
    <property type="evidence" value="ECO:0007669"/>
    <property type="project" value="TreeGrafter"/>
</dbReference>
<dbReference type="GO" id="GO:0019825">
    <property type="term" value="F:oxygen binding"/>
    <property type="evidence" value="ECO:0007669"/>
    <property type="project" value="InterPro"/>
</dbReference>
<dbReference type="GO" id="GO:0005344">
    <property type="term" value="F:oxygen carrier activity"/>
    <property type="evidence" value="ECO:0007669"/>
    <property type="project" value="UniProtKB-KW"/>
</dbReference>
<dbReference type="GO" id="GO:0004601">
    <property type="term" value="F:peroxidase activity"/>
    <property type="evidence" value="ECO:0007669"/>
    <property type="project" value="TreeGrafter"/>
</dbReference>
<dbReference type="GO" id="GO:0042744">
    <property type="term" value="P:hydrogen peroxide catabolic process"/>
    <property type="evidence" value="ECO:0007669"/>
    <property type="project" value="TreeGrafter"/>
</dbReference>
<dbReference type="CDD" id="cd08925">
    <property type="entry name" value="Hb-beta-like"/>
    <property type="match status" value="1"/>
</dbReference>
<dbReference type="FunFam" id="1.10.490.10:FF:000001">
    <property type="entry name" value="Hemoglobin subunit beta"/>
    <property type="match status" value="1"/>
</dbReference>
<dbReference type="Gene3D" id="1.10.490.10">
    <property type="entry name" value="Globins"/>
    <property type="match status" value="1"/>
</dbReference>
<dbReference type="InterPro" id="IPR000971">
    <property type="entry name" value="Globin"/>
</dbReference>
<dbReference type="InterPro" id="IPR009050">
    <property type="entry name" value="Globin-like_sf"/>
</dbReference>
<dbReference type="InterPro" id="IPR012292">
    <property type="entry name" value="Globin/Proto"/>
</dbReference>
<dbReference type="InterPro" id="IPR002337">
    <property type="entry name" value="Hemoglobin_b"/>
</dbReference>
<dbReference type="InterPro" id="IPR050056">
    <property type="entry name" value="Hemoglobin_oxygen_transport"/>
</dbReference>
<dbReference type="PANTHER" id="PTHR11442">
    <property type="entry name" value="HEMOGLOBIN FAMILY MEMBER"/>
    <property type="match status" value="1"/>
</dbReference>
<dbReference type="PANTHER" id="PTHR11442:SF42">
    <property type="entry name" value="HEMOGLOBIN SUBUNIT BETA"/>
    <property type="match status" value="1"/>
</dbReference>
<dbReference type="Pfam" id="PF00042">
    <property type="entry name" value="Globin"/>
    <property type="match status" value="1"/>
</dbReference>
<dbReference type="PRINTS" id="PR00814">
    <property type="entry name" value="BETAHAEM"/>
</dbReference>
<dbReference type="SUPFAM" id="SSF46458">
    <property type="entry name" value="Globin-like"/>
    <property type="match status" value="1"/>
</dbReference>
<dbReference type="PROSITE" id="PS01033">
    <property type="entry name" value="GLOBIN"/>
    <property type="match status" value="1"/>
</dbReference>